<sequence length="496" mass="55759">MVEADHPGKLFIGGLNRETNEKMLKAVFGKHGPISEVLLIKDRTSKSRGFAFITFENPADAKNAAKDMNGKSLHGKAIKVEQAKKPSFQSGGRRRPPASSRNRSPSGSLRSARGSRGGTRGWLPSQEGHLDDGGYTPDLKMSYSRGLIPVKRGPSSRSGGPPPKKSAPSAVARSNSWMGSQGPMSQRRENYGVPPRRATISSWRNDRMSTRHDGYATNDGNHPSCQETRDYAPPSRGYAYRDNGHSNRDEHSSRGYRNHRSSRETRDYAPPSRGHAYRDYGHSRRDESYSRGYRNRRSSRETREYAPPSRGHGYRDYGHSRRHESYSRGYRNHPSSRETRDYAPPHRDYAYRDYGHSSWDEHSSRGYSYHDGYGEALGRDHSEHLSGSSYRDALQRYGTAHGAPPARGPRMSYGGSTCHAYSNTRDRYGRSWESYSSCGDFHYCDREHVCRKDQRNPPSLGRVLPDPREACGSSSYVASIVDGGESRSEKGDSSRY</sequence>
<protein>
    <recommendedName>
        <fullName>RNA-binding motif protein, Y chromosome, family 1 member E</fullName>
    </recommendedName>
</protein>
<reference key="1">
    <citation type="journal article" date="2003" name="Nature">
        <title>The male-specific region of the human Y chromosome is a mosaic of discrete sequence classes.</title>
        <authorList>
            <person name="Skaletsky H."/>
            <person name="Kuroda-Kawaguchi T."/>
            <person name="Minx P.J."/>
            <person name="Cordum H.S."/>
            <person name="Hillier L.W."/>
            <person name="Brown L.G."/>
            <person name="Repping S."/>
            <person name="Pyntikova T."/>
            <person name="Ali J."/>
            <person name="Bieri T."/>
            <person name="Chinwalla A."/>
            <person name="Delehaunty A."/>
            <person name="Delehaunty K."/>
            <person name="Du H."/>
            <person name="Fewell G."/>
            <person name="Fulton L."/>
            <person name="Fulton R."/>
            <person name="Graves T.A."/>
            <person name="Hou S.-F."/>
            <person name="Latrielle P."/>
            <person name="Leonard S."/>
            <person name="Mardis E."/>
            <person name="Maupin R."/>
            <person name="McPherson J."/>
            <person name="Miner T."/>
            <person name="Nash W."/>
            <person name="Nguyen C."/>
            <person name="Ozersky P."/>
            <person name="Pepin K."/>
            <person name="Rock S."/>
            <person name="Rohlfing T."/>
            <person name="Scott K."/>
            <person name="Schultz B."/>
            <person name="Strong C."/>
            <person name="Tin-Wollam A."/>
            <person name="Yang S.-P."/>
            <person name="Waterston R.H."/>
            <person name="Wilson R.K."/>
            <person name="Rozen S."/>
            <person name="Page D.C."/>
        </authorList>
    </citation>
    <scope>NUCLEOTIDE SEQUENCE [LARGE SCALE GENOMIC DNA]</scope>
</reference>
<feature type="chain" id="PRO_0000341539" description="RNA-binding motif protein, Y chromosome, family 1 member E">
    <location>
        <begin position="1"/>
        <end position="496"/>
    </location>
</feature>
<feature type="domain" description="RRM" evidence="1">
    <location>
        <begin position="8"/>
        <end position="85"/>
    </location>
</feature>
<feature type="region of interest" description="Disordered" evidence="2">
    <location>
        <begin position="67"/>
        <end position="348"/>
    </location>
</feature>
<feature type="region of interest" description="Disordered" evidence="2">
    <location>
        <begin position="453"/>
        <end position="496"/>
    </location>
</feature>
<feature type="compositionally biased region" description="Low complexity" evidence="2">
    <location>
        <begin position="97"/>
        <end position="114"/>
    </location>
</feature>
<feature type="compositionally biased region" description="Low complexity" evidence="2">
    <location>
        <begin position="149"/>
        <end position="159"/>
    </location>
</feature>
<feature type="compositionally biased region" description="Polar residues" evidence="2">
    <location>
        <begin position="175"/>
        <end position="184"/>
    </location>
</feature>
<feature type="compositionally biased region" description="Basic and acidic residues" evidence="2">
    <location>
        <begin position="204"/>
        <end position="214"/>
    </location>
</feature>
<feature type="compositionally biased region" description="Basic and acidic residues" evidence="2">
    <location>
        <begin position="242"/>
        <end position="253"/>
    </location>
</feature>
<feature type="compositionally biased region" description="Basic and acidic residues" evidence="2">
    <location>
        <begin position="276"/>
        <end position="289"/>
    </location>
</feature>
<feature type="compositionally biased region" description="Basic and acidic residues" evidence="2">
    <location>
        <begin position="313"/>
        <end position="326"/>
    </location>
</feature>
<feature type="compositionally biased region" description="Basic and acidic residues" evidence="2">
    <location>
        <begin position="335"/>
        <end position="348"/>
    </location>
</feature>
<feature type="compositionally biased region" description="Basic and acidic residues" evidence="2">
    <location>
        <begin position="484"/>
        <end position="496"/>
    </location>
</feature>
<keyword id="KW-0507">mRNA processing</keyword>
<keyword id="KW-0508">mRNA splicing</keyword>
<keyword id="KW-0539">Nucleus</keyword>
<keyword id="KW-1185">Reference proteome</keyword>
<keyword id="KW-0694">RNA-binding</keyword>
<proteinExistence type="evidence at protein level"/>
<name>RBY1E_HUMAN</name>
<gene>
    <name type="primary">RBMY1E</name>
</gene>
<accession>A6NEQ0</accession>
<accession>A6NCW6</accession>
<accession>A6NEG9</accession>
<accession>A6NKQ5</accession>
<evidence type="ECO:0000255" key="1">
    <source>
        <dbReference type="PROSITE-ProRule" id="PRU00176"/>
    </source>
</evidence>
<evidence type="ECO:0000256" key="2">
    <source>
        <dbReference type="SAM" id="MobiDB-lite"/>
    </source>
</evidence>
<dbReference type="EMBL" id="AC007322">
    <property type="status" value="NOT_ANNOTATED_CDS"/>
    <property type="molecule type" value="Genomic_DNA"/>
</dbReference>
<dbReference type="CCDS" id="CCDS35481.1"/>
<dbReference type="RefSeq" id="NP_001006118.2">
    <property type="nucleotide sequence ID" value="NM_001006118.3"/>
</dbReference>
<dbReference type="SMR" id="A6NEQ0"/>
<dbReference type="BioGRID" id="132081">
    <property type="interactions" value="3"/>
</dbReference>
<dbReference type="FunCoup" id="A6NEQ0">
    <property type="interactions" value="9"/>
</dbReference>
<dbReference type="IntAct" id="A6NEQ0">
    <property type="interactions" value="2"/>
</dbReference>
<dbReference type="STRING" id="9606.ENSP00000372105"/>
<dbReference type="iPTMnet" id="A6NEQ0"/>
<dbReference type="PhosphoSitePlus" id="A6NEQ0"/>
<dbReference type="BioMuta" id="RBMY1E"/>
<dbReference type="MassIVE" id="A6NEQ0"/>
<dbReference type="PeptideAtlas" id="A6NEQ0"/>
<dbReference type="ProteomicsDB" id="1001"/>
<dbReference type="Antibodypedia" id="67094">
    <property type="antibodies" value="12 antibodies from 1 providers"/>
</dbReference>
<dbReference type="DNASU" id="378950"/>
<dbReference type="Ensembl" id="ENST00000382659.7">
    <property type="protein sequence ID" value="ENSP00000372105.2"/>
    <property type="gene ID" value="ENSG00000242389.9"/>
</dbReference>
<dbReference type="GeneID" id="378950"/>
<dbReference type="KEGG" id="hsa:378950"/>
<dbReference type="MANE-Select" id="ENST00000382659.7">
    <property type="protein sequence ID" value="ENSP00000372105.2"/>
    <property type="RefSeq nucleotide sequence ID" value="NM_001006118.3"/>
    <property type="RefSeq protein sequence ID" value="NP_001006118.2"/>
</dbReference>
<dbReference type="UCSC" id="uc004fuw.4">
    <property type="organism name" value="human"/>
</dbReference>
<dbReference type="AGR" id="HGNC:23916"/>
<dbReference type="CTD" id="378950"/>
<dbReference type="GeneCards" id="RBMY1E"/>
<dbReference type="HGNC" id="HGNC:23916">
    <property type="gene designation" value="RBMY1E"/>
</dbReference>
<dbReference type="HPA" id="ENSG00000242389">
    <property type="expression patterns" value="Tissue enriched (testis)"/>
</dbReference>
<dbReference type="neXtProt" id="NX_A6NEQ0"/>
<dbReference type="PharmGKB" id="PA134905273"/>
<dbReference type="VEuPathDB" id="HostDB:ENSG00000242389"/>
<dbReference type="GeneTree" id="ENSGT00940000163524"/>
<dbReference type="InParanoid" id="A6NEQ0"/>
<dbReference type="OMA" id="DYSREEY"/>
<dbReference type="PAN-GO" id="A6NEQ0">
    <property type="GO annotations" value="3 GO annotations based on evolutionary models"/>
</dbReference>
<dbReference type="PhylomeDB" id="A6NEQ0"/>
<dbReference type="TreeFam" id="TF331833"/>
<dbReference type="PathwayCommons" id="A6NEQ0"/>
<dbReference type="SignaLink" id="A6NEQ0"/>
<dbReference type="BioGRID-ORCS" id="378950">
    <property type="hits" value="6 hits in 228 CRISPR screens"/>
</dbReference>
<dbReference type="GenomeRNAi" id="378950"/>
<dbReference type="Pharos" id="A6NEQ0">
    <property type="development level" value="Tdark"/>
</dbReference>
<dbReference type="PRO" id="PR:A6NEQ0"/>
<dbReference type="Proteomes" id="UP000005640">
    <property type="component" value="Chromosome Y"/>
</dbReference>
<dbReference type="RNAct" id="A6NEQ0">
    <property type="molecule type" value="protein"/>
</dbReference>
<dbReference type="Bgee" id="ENSG00000242389">
    <property type="expression patterns" value="Expressed in male germ line stem cell (sensu Vertebrata) in testis and 7 other cell types or tissues"/>
</dbReference>
<dbReference type="ExpressionAtlas" id="A6NEQ0">
    <property type="expression patterns" value="baseline and differential"/>
</dbReference>
<dbReference type="GO" id="GO:0005730">
    <property type="term" value="C:nucleolus"/>
    <property type="evidence" value="ECO:0000314"/>
    <property type="project" value="HPA"/>
</dbReference>
<dbReference type="GO" id="GO:0005654">
    <property type="term" value="C:nucleoplasm"/>
    <property type="evidence" value="ECO:0000314"/>
    <property type="project" value="HPA"/>
</dbReference>
<dbReference type="GO" id="GO:0005681">
    <property type="term" value="C:spliceosomal complex"/>
    <property type="evidence" value="ECO:0000318"/>
    <property type="project" value="GO_Central"/>
</dbReference>
<dbReference type="GO" id="GO:0003723">
    <property type="term" value="F:RNA binding"/>
    <property type="evidence" value="ECO:0000318"/>
    <property type="project" value="GO_Central"/>
</dbReference>
<dbReference type="GO" id="GO:0006397">
    <property type="term" value="P:mRNA processing"/>
    <property type="evidence" value="ECO:0007669"/>
    <property type="project" value="UniProtKB-KW"/>
</dbReference>
<dbReference type="GO" id="GO:0048026">
    <property type="term" value="P:positive regulation of mRNA splicing, via spliceosome"/>
    <property type="evidence" value="ECO:0000318"/>
    <property type="project" value="GO_Central"/>
</dbReference>
<dbReference type="GO" id="GO:0008380">
    <property type="term" value="P:RNA splicing"/>
    <property type="evidence" value="ECO:0007669"/>
    <property type="project" value="UniProtKB-KW"/>
</dbReference>
<dbReference type="CDD" id="cd12382">
    <property type="entry name" value="RRM_RBMX_like"/>
    <property type="match status" value="1"/>
</dbReference>
<dbReference type="FunFam" id="3.30.70.330:FF:000470">
    <property type="entry name" value="RNA-binding motif protein, Y chromosome, family 1 member F/J"/>
    <property type="match status" value="1"/>
</dbReference>
<dbReference type="Gene3D" id="3.30.70.330">
    <property type="match status" value="1"/>
</dbReference>
<dbReference type="InterPro" id="IPR012677">
    <property type="entry name" value="Nucleotide-bd_a/b_plait_sf"/>
</dbReference>
<dbReference type="InterPro" id="IPR035979">
    <property type="entry name" value="RBD_domain_sf"/>
</dbReference>
<dbReference type="InterPro" id="IPR050441">
    <property type="entry name" value="RBM"/>
</dbReference>
<dbReference type="InterPro" id="IPR012604">
    <property type="entry name" value="RBM1CTR"/>
</dbReference>
<dbReference type="InterPro" id="IPR000504">
    <property type="entry name" value="RRM_dom"/>
</dbReference>
<dbReference type="PANTHER" id="PTHR48034">
    <property type="entry name" value="TRANSFORMER-2 SEX-DETERMINING PROTEIN-RELATED"/>
    <property type="match status" value="1"/>
</dbReference>
<dbReference type="Pfam" id="PF08081">
    <property type="entry name" value="RBM1CTR"/>
    <property type="match status" value="1"/>
</dbReference>
<dbReference type="Pfam" id="PF00076">
    <property type="entry name" value="RRM_1"/>
    <property type="match status" value="1"/>
</dbReference>
<dbReference type="SMART" id="SM00360">
    <property type="entry name" value="RRM"/>
    <property type="match status" value="1"/>
</dbReference>
<dbReference type="SUPFAM" id="SSF54928">
    <property type="entry name" value="RNA-binding domain, RBD"/>
    <property type="match status" value="1"/>
</dbReference>
<dbReference type="PROSITE" id="PS50102">
    <property type="entry name" value="RRM"/>
    <property type="match status" value="1"/>
</dbReference>
<organism>
    <name type="scientific">Homo sapiens</name>
    <name type="common">Human</name>
    <dbReference type="NCBI Taxonomy" id="9606"/>
    <lineage>
        <taxon>Eukaryota</taxon>
        <taxon>Metazoa</taxon>
        <taxon>Chordata</taxon>
        <taxon>Craniata</taxon>
        <taxon>Vertebrata</taxon>
        <taxon>Euteleostomi</taxon>
        <taxon>Mammalia</taxon>
        <taxon>Eutheria</taxon>
        <taxon>Euarchontoglires</taxon>
        <taxon>Primates</taxon>
        <taxon>Haplorrhini</taxon>
        <taxon>Catarrhini</taxon>
        <taxon>Hominidae</taxon>
        <taxon>Homo</taxon>
    </lineage>
</organism>
<comment type="function">
    <text>RNA-binding protein which may be involved in spermatogenesis. Required for sperm development, possibly by participating in pre-mRNA splicing in the testis.</text>
</comment>
<comment type="subunit">
    <text>Interacts with splicing factor proteins SFRS3/SRP20, TRA2B/SFRS10, KHDRBS1/SAM68 and KHDRBS3.</text>
</comment>
<comment type="interaction">
    <interactant intactId="EBI-11958200">
        <id>A6NEQ0</id>
    </interactant>
    <interactant intactId="EBI-743526">
        <id>P38159</id>
        <label>RBMX</label>
    </interactant>
    <organismsDiffer>false</organismsDiffer>
    <experiments>3</experiments>
</comment>
<comment type="interaction">
    <interactant intactId="EBI-11958200">
        <id>A6NEQ0</id>
    </interactant>
    <interactant intactId="EBI-8642021">
        <id>Q15415</id>
        <label>RBMY1J</label>
    </interactant>
    <organismsDiffer>false</organismsDiffer>
    <experiments>3</experiments>
</comment>
<comment type="subcellular location">
    <subcellularLocation>
        <location>Nucleus</location>
    </subcellularLocation>
</comment>
<comment type="tissue specificity">
    <text>Testis-specific.</text>
</comment>
<comment type="developmental stage">
    <text>Expressed in all of the transcriptionally active stages of germ cell development from spermatogonia through spermatocytes to round spermatids.</text>
</comment>
<comment type="miscellaneous">
    <text>The RBMY1 proteins are encoded by repeated regions of the Y chromosome, mostly within the AZFb region. The exact number of functional copies is unclear and may vary between individuals, and some of them may represent pseudogenes. The proteins are very similar, which makes the characterization of each protein difficult. Thus, most experiments do not discriminate between the different members. One can therefore suppose that reported interactions with a RBMY1 protein involve all the proteins.</text>
</comment>